<sequence length="134" mass="15037">MARVKRGVTAHAKHKKTLKAAKGFYGRRKNTIRAAKAAVDRSKQYAYRDRKVNKRNFRALWIQRINAAVREFGLTYGRFIDGLNKAGIEVDRKVLSDMAIHEPAAFGALVEASKKALAYLKEAGTANEFESAVR</sequence>
<gene>
    <name evidence="1" type="primary">rplT</name>
    <name type="ordered locus">NGR_c36260</name>
</gene>
<reference key="1">
    <citation type="journal article" date="2009" name="Appl. Environ. Microbiol.">
        <title>Rhizobium sp. strain NGR234 possesses a remarkable number of secretion systems.</title>
        <authorList>
            <person name="Schmeisser C."/>
            <person name="Liesegang H."/>
            <person name="Krysciak D."/>
            <person name="Bakkou N."/>
            <person name="Le Quere A."/>
            <person name="Wollherr A."/>
            <person name="Heinemeyer I."/>
            <person name="Morgenstern B."/>
            <person name="Pommerening-Roeser A."/>
            <person name="Flores M."/>
            <person name="Palacios R."/>
            <person name="Brenner S."/>
            <person name="Gottschalk G."/>
            <person name="Schmitz R.A."/>
            <person name="Broughton W.J."/>
            <person name="Perret X."/>
            <person name="Strittmatter A.W."/>
            <person name="Streit W.R."/>
        </authorList>
    </citation>
    <scope>NUCLEOTIDE SEQUENCE [LARGE SCALE GENOMIC DNA]</scope>
    <source>
        <strain>NBRC 101917 / NGR234</strain>
    </source>
</reference>
<accession>C3MCP9</accession>
<comment type="function">
    <text evidence="1">Binds directly to 23S ribosomal RNA and is necessary for the in vitro assembly process of the 50S ribosomal subunit. It is not involved in the protein synthesizing functions of that subunit.</text>
</comment>
<comment type="similarity">
    <text evidence="1">Belongs to the bacterial ribosomal protein bL20 family.</text>
</comment>
<organism>
    <name type="scientific">Sinorhizobium fredii (strain NBRC 101917 / NGR234)</name>
    <dbReference type="NCBI Taxonomy" id="394"/>
    <lineage>
        <taxon>Bacteria</taxon>
        <taxon>Pseudomonadati</taxon>
        <taxon>Pseudomonadota</taxon>
        <taxon>Alphaproteobacteria</taxon>
        <taxon>Hyphomicrobiales</taxon>
        <taxon>Rhizobiaceae</taxon>
        <taxon>Sinorhizobium/Ensifer group</taxon>
        <taxon>Sinorhizobium</taxon>
    </lineage>
</organism>
<dbReference type="EMBL" id="CP001389">
    <property type="protein sequence ID" value="ACP27347.1"/>
    <property type="molecule type" value="Genomic_DNA"/>
</dbReference>
<dbReference type="RefSeq" id="WP_012710091.1">
    <property type="nucleotide sequence ID" value="NC_012587.1"/>
</dbReference>
<dbReference type="RefSeq" id="YP_002828100.1">
    <property type="nucleotide sequence ID" value="NC_012587.1"/>
</dbReference>
<dbReference type="SMR" id="C3MCP9"/>
<dbReference type="STRING" id="394.NGR_c36260"/>
<dbReference type="GeneID" id="48975293"/>
<dbReference type="KEGG" id="rhi:NGR_c36260"/>
<dbReference type="PATRIC" id="fig|394.7.peg.6478"/>
<dbReference type="eggNOG" id="COG0292">
    <property type="taxonomic scope" value="Bacteria"/>
</dbReference>
<dbReference type="HOGENOM" id="CLU_123265_0_1_5"/>
<dbReference type="OrthoDB" id="9808966at2"/>
<dbReference type="Proteomes" id="UP000001054">
    <property type="component" value="Chromosome"/>
</dbReference>
<dbReference type="GO" id="GO:1990904">
    <property type="term" value="C:ribonucleoprotein complex"/>
    <property type="evidence" value="ECO:0007669"/>
    <property type="project" value="UniProtKB-KW"/>
</dbReference>
<dbReference type="GO" id="GO:0005840">
    <property type="term" value="C:ribosome"/>
    <property type="evidence" value="ECO:0007669"/>
    <property type="project" value="UniProtKB-KW"/>
</dbReference>
<dbReference type="GO" id="GO:0019843">
    <property type="term" value="F:rRNA binding"/>
    <property type="evidence" value="ECO:0007669"/>
    <property type="project" value="UniProtKB-UniRule"/>
</dbReference>
<dbReference type="GO" id="GO:0003735">
    <property type="term" value="F:structural constituent of ribosome"/>
    <property type="evidence" value="ECO:0007669"/>
    <property type="project" value="InterPro"/>
</dbReference>
<dbReference type="GO" id="GO:0000027">
    <property type="term" value="P:ribosomal large subunit assembly"/>
    <property type="evidence" value="ECO:0007669"/>
    <property type="project" value="UniProtKB-UniRule"/>
</dbReference>
<dbReference type="GO" id="GO:0006412">
    <property type="term" value="P:translation"/>
    <property type="evidence" value="ECO:0007669"/>
    <property type="project" value="InterPro"/>
</dbReference>
<dbReference type="CDD" id="cd07026">
    <property type="entry name" value="Ribosomal_L20"/>
    <property type="match status" value="1"/>
</dbReference>
<dbReference type="FunFam" id="1.10.1900.20:FF:000001">
    <property type="entry name" value="50S ribosomal protein L20"/>
    <property type="match status" value="1"/>
</dbReference>
<dbReference type="Gene3D" id="6.10.160.10">
    <property type="match status" value="1"/>
</dbReference>
<dbReference type="Gene3D" id="1.10.1900.20">
    <property type="entry name" value="Ribosomal protein L20"/>
    <property type="match status" value="1"/>
</dbReference>
<dbReference type="HAMAP" id="MF_00382">
    <property type="entry name" value="Ribosomal_bL20"/>
    <property type="match status" value="1"/>
</dbReference>
<dbReference type="InterPro" id="IPR005813">
    <property type="entry name" value="Ribosomal_bL20"/>
</dbReference>
<dbReference type="InterPro" id="IPR049946">
    <property type="entry name" value="RIBOSOMAL_L20_CS"/>
</dbReference>
<dbReference type="InterPro" id="IPR035566">
    <property type="entry name" value="Ribosomal_protein_bL20_C"/>
</dbReference>
<dbReference type="NCBIfam" id="TIGR01032">
    <property type="entry name" value="rplT_bact"/>
    <property type="match status" value="1"/>
</dbReference>
<dbReference type="PANTHER" id="PTHR10986">
    <property type="entry name" value="39S RIBOSOMAL PROTEIN L20"/>
    <property type="match status" value="1"/>
</dbReference>
<dbReference type="Pfam" id="PF00453">
    <property type="entry name" value="Ribosomal_L20"/>
    <property type="match status" value="1"/>
</dbReference>
<dbReference type="PRINTS" id="PR00062">
    <property type="entry name" value="RIBOSOMALL20"/>
</dbReference>
<dbReference type="SUPFAM" id="SSF74731">
    <property type="entry name" value="Ribosomal protein L20"/>
    <property type="match status" value="1"/>
</dbReference>
<dbReference type="PROSITE" id="PS00937">
    <property type="entry name" value="RIBOSOMAL_L20"/>
    <property type="match status" value="1"/>
</dbReference>
<proteinExistence type="inferred from homology"/>
<name>RL20_SINFN</name>
<protein>
    <recommendedName>
        <fullName evidence="1">Large ribosomal subunit protein bL20</fullName>
    </recommendedName>
    <alternativeName>
        <fullName evidence="2">50S ribosomal protein L20</fullName>
    </alternativeName>
</protein>
<evidence type="ECO:0000255" key="1">
    <source>
        <dbReference type="HAMAP-Rule" id="MF_00382"/>
    </source>
</evidence>
<evidence type="ECO:0000305" key="2"/>
<feature type="chain" id="PRO_1000193972" description="Large ribosomal subunit protein bL20">
    <location>
        <begin position="1"/>
        <end position="134"/>
    </location>
</feature>
<keyword id="KW-1185">Reference proteome</keyword>
<keyword id="KW-0687">Ribonucleoprotein</keyword>
<keyword id="KW-0689">Ribosomal protein</keyword>
<keyword id="KW-0694">RNA-binding</keyword>
<keyword id="KW-0699">rRNA-binding</keyword>